<name>HBA_CTEGU</name>
<keyword id="KW-0007">Acetylation</keyword>
<keyword id="KW-0903">Direct protein sequencing</keyword>
<keyword id="KW-0349">Heme</keyword>
<keyword id="KW-0408">Iron</keyword>
<keyword id="KW-0479">Metal-binding</keyword>
<keyword id="KW-0561">Oxygen transport</keyword>
<keyword id="KW-0597">Phosphoprotein</keyword>
<keyword id="KW-0813">Transport</keyword>
<reference key="1">
    <citation type="journal article" date="1990" name="Biol. Chem. Hoppe-Seyler">
        <title>The primary structures of gundi (Ctenodactylus gundi, Rodentia) hemoglobin and myoglobin.</title>
        <authorList>
            <person name="Beintema J.J."/>
            <person name="Rodewald K."/>
            <person name="Braunitzer G."/>
        </authorList>
    </citation>
    <scope>PROTEIN SEQUENCE</scope>
</reference>
<evidence type="ECO:0000250" key="1">
    <source>
        <dbReference type="UniProtKB" id="P01942"/>
    </source>
</evidence>
<evidence type="ECO:0000250" key="2">
    <source>
        <dbReference type="UniProtKB" id="P01946"/>
    </source>
</evidence>
<evidence type="ECO:0000250" key="3">
    <source>
        <dbReference type="UniProtKB" id="P69905"/>
    </source>
</evidence>
<evidence type="ECO:0000255" key="4">
    <source>
        <dbReference type="PROSITE-ProRule" id="PRU00238"/>
    </source>
</evidence>
<gene>
    <name type="primary">HBA</name>
</gene>
<protein>
    <recommendedName>
        <fullName>Hemoglobin subunit alpha</fullName>
    </recommendedName>
    <alternativeName>
        <fullName>Alpha-globin</fullName>
    </alternativeName>
    <alternativeName>
        <fullName>Hemoglobin alpha chain</fullName>
    </alternativeName>
    <component>
        <recommendedName>
            <fullName evidence="2">Hemopressin</fullName>
        </recommendedName>
    </component>
</protein>
<sequence>VLSAADKTNVKAAWDKIGGHGGEYGAEALERMFLSFPTTKTYFPHFDVSHGSAQVKAHGKKVADALANAASHLDDLPNALSALSDLHAHKLRVDPVNFKLLSHCLLVTLACHHPAEFTPAVHASLDKFLATVATVLTSKYR</sequence>
<comment type="function">
    <text>Involved in oxygen transport from the lung to the various peripheral tissues.</text>
</comment>
<comment type="function">
    <molecule>Hemopressin</molecule>
    <text evidence="2">Hemopressin acts as an antagonist peptide of the cannabinoid receptor CNR1. Hemopressin-binding efficiently blocks cannabinoid receptor CNR1 and subsequent signaling.</text>
</comment>
<comment type="subunit">
    <text>Heterotetramer of two alpha chains and two beta chains.</text>
</comment>
<comment type="tissue specificity">
    <text>Red blood cells.</text>
</comment>
<comment type="similarity">
    <text evidence="4">Belongs to the globin family.</text>
</comment>
<organism>
    <name type="scientific">Ctenodactylus gundi</name>
    <name type="common">Northern gundi</name>
    <dbReference type="NCBI Taxonomy" id="10166"/>
    <lineage>
        <taxon>Eukaryota</taxon>
        <taxon>Metazoa</taxon>
        <taxon>Chordata</taxon>
        <taxon>Craniata</taxon>
        <taxon>Vertebrata</taxon>
        <taxon>Euteleostomi</taxon>
        <taxon>Mammalia</taxon>
        <taxon>Eutheria</taxon>
        <taxon>Euarchontoglires</taxon>
        <taxon>Glires</taxon>
        <taxon>Rodentia</taxon>
        <taxon>Hystricomorpha</taxon>
        <taxon>Ctenodactylidae</taxon>
        <taxon>Ctenodactylus</taxon>
    </lineage>
</organism>
<proteinExistence type="evidence at protein level"/>
<dbReference type="PIR" id="S13282">
    <property type="entry name" value="HARTNG"/>
</dbReference>
<dbReference type="SMR" id="P20854"/>
<dbReference type="GO" id="GO:0072562">
    <property type="term" value="C:blood microparticle"/>
    <property type="evidence" value="ECO:0007669"/>
    <property type="project" value="TreeGrafter"/>
</dbReference>
<dbReference type="GO" id="GO:0031838">
    <property type="term" value="C:haptoglobin-hemoglobin complex"/>
    <property type="evidence" value="ECO:0007669"/>
    <property type="project" value="TreeGrafter"/>
</dbReference>
<dbReference type="GO" id="GO:0005833">
    <property type="term" value="C:hemoglobin complex"/>
    <property type="evidence" value="ECO:0007669"/>
    <property type="project" value="InterPro"/>
</dbReference>
<dbReference type="GO" id="GO:0031720">
    <property type="term" value="F:haptoglobin binding"/>
    <property type="evidence" value="ECO:0007669"/>
    <property type="project" value="TreeGrafter"/>
</dbReference>
<dbReference type="GO" id="GO:0020037">
    <property type="term" value="F:heme binding"/>
    <property type="evidence" value="ECO:0007669"/>
    <property type="project" value="InterPro"/>
</dbReference>
<dbReference type="GO" id="GO:0005506">
    <property type="term" value="F:iron ion binding"/>
    <property type="evidence" value="ECO:0007669"/>
    <property type="project" value="InterPro"/>
</dbReference>
<dbReference type="GO" id="GO:0043177">
    <property type="term" value="F:organic acid binding"/>
    <property type="evidence" value="ECO:0007669"/>
    <property type="project" value="TreeGrafter"/>
</dbReference>
<dbReference type="GO" id="GO:0019825">
    <property type="term" value="F:oxygen binding"/>
    <property type="evidence" value="ECO:0007669"/>
    <property type="project" value="InterPro"/>
</dbReference>
<dbReference type="GO" id="GO:0005344">
    <property type="term" value="F:oxygen carrier activity"/>
    <property type="evidence" value="ECO:0007669"/>
    <property type="project" value="UniProtKB-KW"/>
</dbReference>
<dbReference type="GO" id="GO:0004601">
    <property type="term" value="F:peroxidase activity"/>
    <property type="evidence" value="ECO:0007669"/>
    <property type="project" value="TreeGrafter"/>
</dbReference>
<dbReference type="GO" id="GO:0042744">
    <property type="term" value="P:hydrogen peroxide catabolic process"/>
    <property type="evidence" value="ECO:0007669"/>
    <property type="project" value="TreeGrafter"/>
</dbReference>
<dbReference type="CDD" id="cd08927">
    <property type="entry name" value="Hb-alpha-like"/>
    <property type="match status" value="1"/>
</dbReference>
<dbReference type="FunFam" id="1.10.490.10:FF:000002">
    <property type="entry name" value="Hemoglobin subunit alpha"/>
    <property type="match status" value="1"/>
</dbReference>
<dbReference type="Gene3D" id="1.10.490.10">
    <property type="entry name" value="Globins"/>
    <property type="match status" value="1"/>
</dbReference>
<dbReference type="InterPro" id="IPR000971">
    <property type="entry name" value="Globin"/>
</dbReference>
<dbReference type="InterPro" id="IPR009050">
    <property type="entry name" value="Globin-like_sf"/>
</dbReference>
<dbReference type="InterPro" id="IPR012292">
    <property type="entry name" value="Globin/Proto"/>
</dbReference>
<dbReference type="InterPro" id="IPR002338">
    <property type="entry name" value="Hemoglobin_a-typ"/>
</dbReference>
<dbReference type="InterPro" id="IPR050056">
    <property type="entry name" value="Hemoglobin_oxygen_transport"/>
</dbReference>
<dbReference type="InterPro" id="IPR002339">
    <property type="entry name" value="Hemoglobin_pi"/>
</dbReference>
<dbReference type="PANTHER" id="PTHR11442">
    <property type="entry name" value="HEMOGLOBIN FAMILY MEMBER"/>
    <property type="match status" value="1"/>
</dbReference>
<dbReference type="PANTHER" id="PTHR11442:SF48">
    <property type="entry name" value="HEMOGLOBIN SUBUNIT ALPHA"/>
    <property type="match status" value="1"/>
</dbReference>
<dbReference type="Pfam" id="PF00042">
    <property type="entry name" value="Globin"/>
    <property type="match status" value="1"/>
</dbReference>
<dbReference type="PRINTS" id="PR00612">
    <property type="entry name" value="ALPHAHAEM"/>
</dbReference>
<dbReference type="PRINTS" id="PR00815">
    <property type="entry name" value="PIHAEM"/>
</dbReference>
<dbReference type="SUPFAM" id="SSF46458">
    <property type="entry name" value="Globin-like"/>
    <property type="match status" value="1"/>
</dbReference>
<dbReference type="PROSITE" id="PS01033">
    <property type="entry name" value="GLOBIN"/>
    <property type="match status" value="1"/>
</dbReference>
<accession>P20854</accession>
<feature type="chain" id="PRO_0000052611" description="Hemoglobin subunit alpha">
    <location>
        <begin position="1"/>
        <end position="141"/>
    </location>
</feature>
<feature type="peptide" id="PRO_0000455862" description="Hemopressin" evidence="2">
    <location>
        <begin position="95"/>
        <end position="103"/>
    </location>
</feature>
<feature type="domain" description="Globin" evidence="4">
    <location>
        <begin position="1"/>
        <end position="141"/>
    </location>
</feature>
<feature type="binding site" evidence="4">
    <location>
        <position position="58"/>
    </location>
    <ligand>
        <name>O2</name>
        <dbReference type="ChEBI" id="CHEBI:15379"/>
    </ligand>
</feature>
<feature type="binding site" description="proximal binding residue" evidence="4">
    <location>
        <position position="87"/>
    </location>
    <ligand>
        <name>heme b</name>
        <dbReference type="ChEBI" id="CHEBI:60344"/>
    </ligand>
    <ligandPart>
        <name>Fe</name>
        <dbReference type="ChEBI" id="CHEBI:18248"/>
    </ligandPart>
</feature>
<feature type="modified residue" description="Phosphoserine" evidence="3">
    <location>
        <position position="3"/>
    </location>
</feature>
<feature type="modified residue" description="N6-succinyllysine" evidence="1">
    <location>
        <position position="7"/>
    </location>
</feature>
<feature type="modified residue" description="Phosphothreonine" evidence="3">
    <location>
        <position position="8"/>
    </location>
</feature>
<feature type="modified residue" description="N6-succinyllysine" evidence="1">
    <location>
        <position position="11"/>
    </location>
</feature>
<feature type="modified residue" description="N6-acetyllysine; alternate" evidence="3">
    <location>
        <position position="16"/>
    </location>
</feature>
<feature type="modified residue" description="N6-succinyllysine; alternate" evidence="1">
    <location>
        <position position="16"/>
    </location>
</feature>
<feature type="modified residue" description="Phosphotyrosine" evidence="3">
    <location>
        <position position="24"/>
    </location>
</feature>
<feature type="modified residue" description="Phosphoserine" evidence="3">
    <location>
        <position position="35"/>
    </location>
</feature>
<feature type="modified residue" description="N6-succinyllysine" evidence="1">
    <location>
        <position position="40"/>
    </location>
</feature>
<feature type="modified residue" description="Phosphoserine" evidence="3">
    <location>
        <position position="49"/>
    </location>
</feature>
<feature type="modified residue" description="Phosphoserine" evidence="1">
    <location>
        <position position="102"/>
    </location>
</feature>
<feature type="modified residue" description="Phosphothreonine" evidence="1">
    <location>
        <position position="108"/>
    </location>
</feature>
<feature type="modified residue" description="Phosphoserine" evidence="1">
    <location>
        <position position="124"/>
    </location>
</feature>
<feature type="modified residue" description="Phosphothreonine" evidence="1">
    <location>
        <position position="134"/>
    </location>
</feature>
<feature type="modified residue" description="Phosphothreonine" evidence="1">
    <location>
        <position position="137"/>
    </location>
</feature>
<feature type="modified residue" description="Phosphoserine" evidence="1">
    <location>
        <position position="138"/>
    </location>
</feature>